<accession>Q39JD2</accession>
<protein>
    <recommendedName>
        <fullName evidence="1">Ferrochelatase</fullName>
        <ecNumber evidence="1">4.98.1.1</ecNumber>
    </recommendedName>
    <alternativeName>
        <fullName evidence="1">Heme synthase</fullName>
    </alternativeName>
    <alternativeName>
        <fullName evidence="1">Protoheme ferro-lyase</fullName>
    </alternativeName>
</protein>
<name>HEMH_BURL3</name>
<proteinExistence type="inferred from homology"/>
<organism>
    <name type="scientific">Burkholderia lata (strain ATCC 17760 / DSM 23089 / LMG 22485 / NCIMB 9086 / R18194 / 383)</name>
    <dbReference type="NCBI Taxonomy" id="482957"/>
    <lineage>
        <taxon>Bacteria</taxon>
        <taxon>Pseudomonadati</taxon>
        <taxon>Pseudomonadota</taxon>
        <taxon>Betaproteobacteria</taxon>
        <taxon>Burkholderiales</taxon>
        <taxon>Burkholderiaceae</taxon>
        <taxon>Burkholderia</taxon>
        <taxon>Burkholderia cepacia complex</taxon>
    </lineage>
</organism>
<evidence type="ECO:0000255" key="1">
    <source>
        <dbReference type="HAMAP-Rule" id="MF_00323"/>
    </source>
</evidence>
<sequence length="354" mass="39286">MRFDLEPPSSTAAAHRIGVLLINLGTPDAPTPRAVRRYLAEFLSDPRVVEIPQAVWQVLLRTLILPLRGRASAKKYAAVWMPEGSPLRVYTERQTDSVRHLLTSNGYHVMVDYAMRYGSPNISHALAQFKRAGVERVLLMPMYPQYSASTTATAFDAAFDALARMRNQPEVRTVRHYADHPAYIHALAEQVRQYWAQHGRPDFAAGDKLVLSFHGVPKRTLDLGDPYHDQCQQTGALLTAALGLSTTECRVTFQSRFGKAEWLQPYTAPTLREFGEAGVRRADVFCPGFTADCLETIEEIGMEVRDEFLAGGGKAFHRIPCLNGAPAWIGALGEIVAENLQGWPVRAAQPETVS</sequence>
<gene>
    <name evidence="1" type="primary">hemH</name>
    <name type="ordered locus">Bcep18194_A3835</name>
</gene>
<reference key="1">
    <citation type="submission" date="2005-10" db="EMBL/GenBank/DDBJ databases">
        <title>Complete sequence of chromosome 1 of Burkholderia sp. 383.</title>
        <authorList>
            <consortium name="US DOE Joint Genome Institute"/>
            <person name="Copeland A."/>
            <person name="Lucas S."/>
            <person name="Lapidus A."/>
            <person name="Barry K."/>
            <person name="Detter J.C."/>
            <person name="Glavina T."/>
            <person name="Hammon N."/>
            <person name="Israni S."/>
            <person name="Pitluck S."/>
            <person name="Chain P."/>
            <person name="Malfatti S."/>
            <person name="Shin M."/>
            <person name="Vergez L."/>
            <person name="Schmutz J."/>
            <person name="Larimer F."/>
            <person name="Land M."/>
            <person name="Kyrpides N."/>
            <person name="Lykidis A."/>
            <person name="Richardson P."/>
        </authorList>
    </citation>
    <scope>NUCLEOTIDE SEQUENCE [LARGE SCALE GENOMIC DNA]</scope>
    <source>
        <strain>ATCC 17760 / DSM 23089 / LMG 22485 / NCIMB 9086 / R18194 / 383</strain>
    </source>
</reference>
<keyword id="KW-0963">Cytoplasm</keyword>
<keyword id="KW-0350">Heme biosynthesis</keyword>
<keyword id="KW-0408">Iron</keyword>
<keyword id="KW-0456">Lyase</keyword>
<keyword id="KW-0479">Metal-binding</keyword>
<keyword id="KW-0627">Porphyrin biosynthesis</keyword>
<comment type="function">
    <text evidence="1">Catalyzes the ferrous insertion into protoporphyrin IX.</text>
</comment>
<comment type="catalytic activity">
    <reaction evidence="1">
        <text>heme b + 2 H(+) = protoporphyrin IX + Fe(2+)</text>
        <dbReference type="Rhea" id="RHEA:22584"/>
        <dbReference type="ChEBI" id="CHEBI:15378"/>
        <dbReference type="ChEBI" id="CHEBI:29033"/>
        <dbReference type="ChEBI" id="CHEBI:57306"/>
        <dbReference type="ChEBI" id="CHEBI:60344"/>
        <dbReference type="EC" id="4.98.1.1"/>
    </reaction>
</comment>
<comment type="pathway">
    <text evidence="1">Porphyrin-containing compound metabolism; protoheme biosynthesis; protoheme from protoporphyrin-IX: step 1/1.</text>
</comment>
<comment type="subcellular location">
    <subcellularLocation>
        <location evidence="1">Cytoplasm</location>
    </subcellularLocation>
</comment>
<comment type="similarity">
    <text evidence="1">Belongs to the ferrochelatase family.</text>
</comment>
<feature type="chain" id="PRO_1000019285" description="Ferrochelatase">
    <location>
        <begin position="1"/>
        <end position="354"/>
    </location>
</feature>
<feature type="binding site" evidence="1">
    <location>
        <position position="214"/>
    </location>
    <ligand>
        <name>Fe cation</name>
        <dbReference type="ChEBI" id="CHEBI:24875"/>
    </ligand>
</feature>
<feature type="binding site" evidence="1">
    <location>
        <position position="295"/>
    </location>
    <ligand>
        <name>Fe cation</name>
        <dbReference type="ChEBI" id="CHEBI:24875"/>
    </ligand>
</feature>
<dbReference type="EC" id="4.98.1.1" evidence="1"/>
<dbReference type="EMBL" id="CP000151">
    <property type="protein sequence ID" value="ABB07434.1"/>
    <property type="molecule type" value="Genomic_DNA"/>
</dbReference>
<dbReference type="RefSeq" id="WP_011351020.1">
    <property type="nucleotide sequence ID" value="NC_007510.1"/>
</dbReference>
<dbReference type="SMR" id="Q39JD2"/>
<dbReference type="GeneID" id="45093746"/>
<dbReference type="KEGG" id="bur:Bcep18194_A3835"/>
<dbReference type="PATRIC" id="fig|482957.22.peg.701"/>
<dbReference type="HOGENOM" id="CLU_018884_0_0_4"/>
<dbReference type="UniPathway" id="UPA00252">
    <property type="reaction ID" value="UER00325"/>
</dbReference>
<dbReference type="Proteomes" id="UP000002705">
    <property type="component" value="Chromosome 1"/>
</dbReference>
<dbReference type="GO" id="GO:0005737">
    <property type="term" value="C:cytoplasm"/>
    <property type="evidence" value="ECO:0007669"/>
    <property type="project" value="UniProtKB-SubCell"/>
</dbReference>
<dbReference type="GO" id="GO:0004325">
    <property type="term" value="F:ferrochelatase activity"/>
    <property type="evidence" value="ECO:0007669"/>
    <property type="project" value="UniProtKB-UniRule"/>
</dbReference>
<dbReference type="GO" id="GO:0046872">
    <property type="term" value="F:metal ion binding"/>
    <property type="evidence" value="ECO:0007669"/>
    <property type="project" value="UniProtKB-KW"/>
</dbReference>
<dbReference type="GO" id="GO:0006783">
    <property type="term" value="P:heme biosynthetic process"/>
    <property type="evidence" value="ECO:0007669"/>
    <property type="project" value="UniProtKB-UniRule"/>
</dbReference>
<dbReference type="CDD" id="cd00419">
    <property type="entry name" value="Ferrochelatase_C"/>
    <property type="match status" value="1"/>
</dbReference>
<dbReference type="CDD" id="cd03411">
    <property type="entry name" value="Ferrochelatase_N"/>
    <property type="match status" value="1"/>
</dbReference>
<dbReference type="FunFam" id="3.40.50.1400:FF:000002">
    <property type="entry name" value="Ferrochelatase"/>
    <property type="match status" value="1"/>
</dbReference>
<dbReference type="Gene3D" id="3.40.50.1400">
    <property type="match status" value="2"/>
</dbReference>
<dbReference type="HAMAP" id="MF_00323">
    <property type="entry name" value="Ferrochelatase"/>
    <property type="match status" value="1"/>
</dbReference>
<dbReference type="InterPro" id="IPR001015">
    <property type="entry name" value="Ferrochelatase"/>
</dbReference>
<dbReference type="InterPro" id="IPR019772">
    <property type="entry name" value="Ferrochelatase_AS"/>
</dbReference>
<dbReference type="InterPro" id="IPR033644">
    <property type="entry name" value="Ferrochelatase_C"/>
</dbReference>
<dbReference type="InterPro" id="IPR033659">
    <property type="entry name" value="Ferrochelatase_N"/>
</dbReference>
<dbReference type="NCBIfam" id="TIGR00109">
    <property type="entry name" value="hemH"/>
    <property type="match status" value="1"/>
</dbReference>
<dbReference type="PANTHER" id="PTHR11108">
    <property type="entry name" value="FERROCHELATASE"/>
    <property type="match status" value="1"/>
</dbReference>
<dbReference type="PANTHER" id="PTHR11108:SF1">
    <property type="entry name" value="FERROCHELATASE, MITOCHONDRIAL"/>
    <property type="match status" value="1"/>
</dbReference>
<dbReference type="Pfam" id="PF00762">
    <property type="entry name" value="Ferrochelatase"/>
    <property type="match status" value="1"/>
</dbReference>
<dbReference type="SUPFAM" id="SSF53800">
    <property type="entry name" value="Chelatase"/>
    <property type="match status" value="1"/>
</dbReference>
<dbReference type="PROSITE" id="PS00534">
    <property type="entry name" value="FERROCHELATASE"/>
    <property type="match status" value="1"/>
</dbReference>